<name>DEF2_RICCN</name>
<comment type="function">
    <text evidence="1">Removes the formyl group from the N-terminal Met of newly synthesized proteins. Requires at least a dipeptide for an efficient rate of reaction. N-terminal L-methionine is a prerequisite for activity but the enzyme has broad specificity at other positions.</text>
</comment>
<comment type="catalytic activity">
    <reaction evidence="1">
        <text>N-terminal N-formyl-L-methionyl-[peptide] + H2O = N-terminal L-methionyl-[peptide] + formate</text>
        <dbReference type="Rhea" id="RHEA:24420"/>
        <dbReference type="Rhea" id="RHEA-COMP:10639"/>
        <dbReference type="Rhea" id="RHEA-COMP:10640"/>
        <dbReference type="ChEBI" id="CHEBI:15377"/>
        <dbReference type="ChEBI" id="CHEBI:15740"/>
        <dbReference type="ChEBI" id="CHEBI:49298"/>
        <dbReference type="ChEBI" id="CHEBI:64731"/>
        <dbReference type="EC" id="3.5.1.88"/>
    </reaction>
</comment>
<comment type="cofactor">
    <cofactor evidence="1">
        <name>Fe(2+)</name>
        <dbReference type="ChEBI" id="CHEBI:29033"/>
    </cofactor>
    <text evidence="1">Binds 1 Fe(2+) ion.</text>
</comment>
<comment type="similarity">
    <text evidence="1">Belongs to the polypeptide deformylase family.</text>
</comment>
<comment type="sequence caution" evidence="2">
    <conflict type="erroneous initiation">
        <sequence resource="EMBL-CDS" id="AAL02618"/>
    </conflict>
</comment>
<gene>
    <name evidence="1" type="primary">def2</name>
    <name type="ordered locus">RC0080</name>
</gene>
<keyword id="KW-0378">Hydrolase</keyword>
<keyword id="KW-0408">Iron</keyword>
<keyword id="KW-0479">Metal-binding</keyword>
<keyword id="KW-0648">Protein biosynthesis</keyword>
<reference key="1">
    <citation type="journal article" date="2001" name="Science">
        <title>Mechanisms of evolution in Rickettsia conorii and R. prowazekii.</title>
        <authorList>
            <person name="Ogata H."/>
            <person name="Audic S."/>
            <person name="Renesto-Audiffren P."/>
            <person name="Fournier P.-E."/>
            <person name="Barbe V."/>
            <person name="Samson D."/>
            <person name="Roux V."/>
            <person name="Cossart P."/>
            <person name="Weissenbach J."/>
            <person name="Claverie J.-M."/>
            <person name="Raoult D."/>
        </authorList>
    </citation>
    <scope>NUCLEOTIDE SEQUENCE [LARGE SCALE GENOMIC DNA]</scope>
    <source>
        <strain>ATCC VR-613 / Malish 7</strain>
    </source>
</reference>
<organism>
    <name type="scientific">Rickettsia conorii (strain ATCC VR-613 / Malish 7)</name>
    <dbReference type="NCBI Taxonomy" id="272944"/>
    <lineage>
        <taxon>Bacteria</taxon>
        <taxon>Pseudomonadati</taxon>
        <taxon>Pseudomonadota</taxon>
        <taxon>Alphaproteobacteria</taxon>
        <taxon>Rickettsiales</taxon>
        <taxon>Rickettsiaceae</taxon>
        <taxon>Rickettsieae</taxon>
        <taxon>Rickettsia</taxon>
        <taxon>spotted fever group</taxon>
    </lineage>
</organism>
<proteinExistence type="inferred from homology"/>
<protein>
    <recommendedName>
        <fullName evidence="1">Peptide deformylase 2</fullName>
        <shortName evidence="1">PDF 2</shortName>
        <ecNumber evidence="1">3.5.1.88</ecNumber>
    </recommendedName>
    <alternativeName>
        <fullName evidence="1">Polypeptide deformylase 2</fullName>
    </alternativeName>
</protein>
<dbReference type="EC" id="3.5.1.88" evidence="1"/>
<dbReference type="EMBL" id="AE006914">
    <property type="protein sequence ID" value="AAL02618.1"/>
    <property type="status" value="ALT_INIT"/>
    <property type="molecule type" value="Genomic_DNA"/>
</dbReference>
<dbReference type="PIR" id="H97709">
    <property type="entry name" value="H97709"/>
</dbReference>
<dbReference type="SMR" id="Q92JI7"/>
<dbReference type="KEGG" id="rco:RC0080"/>
<dbReference type="HOGENOM" id="CLU_061901_5_2_5"/>
<dbReference type="Proteomes" id="UP000000816">
    <property type="component" value="Chromosome"/>
</dbReference>
<dbReference type="GO" id="GO:0046872">
    <property type="term" value="F:metal ion binding"/>
    <property type="evidence" value="ECO:0007669"/>
    <property type="project" value="UniProtKB-KW"/>
</dbReference>
<dbReference type="GO" id="GO:0042586">
    <property type="term" value="F:peptide deformylase activity"/>
    <property type="evidence" value="ECO:0007669"/>
    <property type="project" value="UniProtKB-UniRule"/>
</dbReference>
<dbReference type="GO" id="GO:0043686">
    <property type="term" value="P:co-translational protein modification"/>
    <property type="evidence" value="ECO:0007669"/>
    <property type="project" value="TreeGrafter"/>
</dbReference>
<dbReference type="GO" id="GO:0006412">
    <property type="term" value="P:translation"/>
    <property type="evidence" value="ECO:0007669"/>
    <property type="project" value="UniProtKB-UniRule"/>
</dbReference>
<dbReference type="CDD" id="cd00487">
    <property type="entry name" value="Pep_deformylase"/>
    <property type="match status" value="1"/>
</dbReference>
<dbReference type="Gene3D" id="3.90.45.10">
    <property type="entry name" value="Peptide deformylase"/>
    <property type="match status" value="1"/>
</dbReference>
<dbReference type="HAMAP" id="MF_00163">
    <property type="entry name" value="Pep_deformylase"/>
    <property type="match status" value="1"/>
</dbReference>
<dbReference type="InterPro" id="IPR023635">
    <property type="entry name" value="Peptide_deformylase"/>
</dbReference>
<dbReference type="InterPro" id="IPR036821">
    <property type="entry name" value="Peptide_deformylase_sf"/>
</dbReference>
<dbReference type="PANTHER" id="PTHR10458">
    <property type="entry name" value="PEPTIDE DEFORMYLASE"/>
    <property type="match status" value="1"/>
</dbReference>
<dbReference type="PANTHER" id="PTHR10458:SF22">
    <property type="entry name" value="PEPTIDE DEFORMYLASE"/>
    <property type="match status" value="1"/>
</dbReference>
<dbReference type="Pfam" id="PF01327">
    <property type="entry name" value="Pep_deformylase"/>
    <property type="match status" value="1"/>
</dbReference>
<dbReference type="PIRSF" id="PIRSF004749">
    <property type="entry name" value="Pep_def"/>
    <property type="match status" value="1"/>
</dbReference>
<dbReference type="PRINTS" id="PR01576">
    <property type="entry name" value="PDEFORMYLASE"/>
</dbReference>
<dbReference type="SUPFAM" id="SSF56420">
    <property type="entry name" value="Peptide deformylase"/>
    <property type="match status" value="1"/>
</dbReference>
<evidence type="ECO:0000255" key="1">
    <source>
        <dbReference type="HAMAP-Rule" id="MF_00163"/>
    </source>
</evidence>
<evidence type="ECO:0000305" key="2"/>
<sequence length="202" mass="23191">MKNENNISLPQYVTLNIQTLNSSEDKTIRIKAKTLNFPLSSEDLRDISILEKKYDQEENCAGLAAPQIGISKCIIIFAVHEDAELKKWHPDLKDTMPKTIWINPSYKPIGIDKHEDYEGCFSVENATGPVARFKKIHYHAYDINGNQIQGIAEGFLARVIQHEIDHLNGKVFLDYVAPKKIMTKEEYLEMRKKAMEQENIKS</sequence>
<accession>Q92JI7</accession>
<feature type="chain" id="PRO_0000082830" description="Peptide deformylase 2">
    <location>
        <begin position="1"/>
        <end position="202"/>
    </location>
</feature>
<feature type="active site" evidence="1">
    <location>
        <position position="163"/>
    </location>
</feature>
<feature type="binding site" evidence="1">
    <location>
        <position position="120"/>
    </location>
    <ligand>
        <name>Fe cation</name>
        <dbReference type="ChEBI" id="CHEBI:24875"/>
    </ligand>
</feature>
<feature type="binding site" evidence="1">
    <location>
        <position position="162"/>
    </location>
    <ligand>
        <name>Fe cation</name>
        <dbReference type="ChEBI" id="CHEBI:24875"/>
    </ligand>
</feature>
<feature type="binding site" evidence="1">
    <location>
        <position position="166"/>
    </location>
    <ligand>
        <name>Fe cation</name>
        <dbReference type="ChEBI" id="CHEBI:24875"/>
    </ligand>
</feature>